<sequence length="59" mass="6661">MAVPKRKTSPSRRNMRRSHHALTAEAFQECPNCGELKRPHNLCNACGHYNGREIVSVEA</sequence>
<keyword id="KW-1185">Reference proteome</keyword>
<keyword id="KW-0687">Ribonucleoprotein</keyword>
<keyword id="KW-0689">Ribosomal protein</keyword>
<comment type="similarity">
    <text evidence="1">Belongs to the bacterial ribosomal protein bL32 family.</text>
</comment>
<accession>A5VC84</accession>
<reference key="1">
    <citation type="journal article" date="2010" name="J. Bacteriol.">
        <title>Genome sequence of the dioxin-mineralizing bacterium Sphingomonas wittichii RW1.</title>
        <authorList>
            <person name="Miller T.R."/>
            <person name="Delcher A.L."/>
            <person name="Salzberg S.L."/>
            <person name="Saunders E."/>
            <person name="Detter J.C."/>
            <person name="Halden R.U."/>
        </authorList>
    </citation>
    <scope>NUCLEOTIDE SEQUENCE [LARGE SCALE GENOMIC DNA]</scope>
    <source>
        <strain>DSM 6014 / CCUG 31198 / JCM 15750 / NBRC 105917 / EY 4224 / RW1</strain>
    </source>
</reference>
<proteinExistence type="inferred from homology"/>
<feature type="chain" id="PRO_1000005081" description="Large ribosomal subunit protein bL32">
    <location>
        <begin position="1"/>
        <end position="59"/>
    </location>
</feature>
<dbReference type="EMBL" id="CP000699">
    <property type="protein sequence ID" value="ABQ69900.1"/>
    <property type="molecule type" value="Genomic_DNA"/>
</dbReference>
<dbReference type="SMR" id="A5VC84"/>
<dbReference type="STRING" id="392499.Swit_3554"/>
<dbReference type="PaxDb" id="392499-Swit_3554"/>
<dbReference type="KEGG" id="swi:Swit_3554"/>
<dbReference type="eggNOG" id="COG0333">
    <property type="taxonomic scope" value="Bacteria"/>
</dbReference>
<dbReference type="HOGENOM" id="CLU_129084_1_3_5"/>
<dbReference type="OrthoDB" id="9801927at2"/>
<dbReference type="Proteomes" id="UP000001989">
    <property type="component" value="Chromosome"/>
</dbReference>
<dbReference type="GO" id="GO:0015934">
    <property type="term" value="C:large ribosomal subunit"/>
    <property type="evidence" value="ECO:0007669"/>
    <property type="project" value="InterPro"/>
</dbReference>
<dbReference type="GO" id="GO:0003735">
    <property type="term" value="F:structural constituent of ribosome"/>
    <property type="evidence" value="ECO:0007669"/>
    <property type="project" value="InterPro"/>
</dbReference>
<dbReference type="GO" id="GO:0006412">
    <property type="term" value="P:translation"/>
    <property type="evidence" value="ECO:0007669"/>
    <property type="project" value="UniProtKB-UniRule"/>
</dbReference>
<dbReference type="Gene3D" id="1.20.5.640">
    <property type="entry name" value="Single helix bin"/>
    <property type="match status" value="1"/>
</dbReference>
<dbReference type="HAMAP" id="MF_00340">
    <property type="entry name" value="Ribosomal_bL32"/>
    <property type="match status" value="1"/>
</dbReference>
<dbReference type="InterPro" id="IPR002677">
    <property type="entry name" value="Ribosomal_bL32"/>
</dbReference>
<dbReference type="InterPro" id="IPR044957">
    <property type="entry name" value="Ribosomal_bL32_bact"/>
</dbReference>
<dbReference type="InterPro" id="IPR011332">
    <property type="entry name" value="Ribosomal_zn-bd"/>
</dbReference>
<dbReference type="NCBIfam" id="TIGR01031">
    <property type="entry name" value="rpmF_bact"/>
    <property type="match status" value="1"/>
</dbReference>
<dbReference type="PANTHER" id="PTHR35534">
    <property type="entry name" value="50S RIBOSOMAL PROTEIN L32"/>
    <property type="match status" value="1"/>
</dbReference>
<dbReference type="PANTHER" id="PTHR35534:SF1">
    <property type="entry name" value="LARGE RIBOSOMAL SUBUNIT PROTEIN BL32"/>
    <property type="match status" value="1"/>
</dbReference>
<dbReference type="Pfam" id="PF01783">
    <property type="entry name" value="Ribosomal_L32p"/>
    <property type="match status" value="1"/>
</dbReference>
<dbReference type="SUPFAM" id="SSF57829">
    <property type="entry name" value="Zn-binding ribosomal proteins"/>
    <property type="match status" value="1"/>
</dbReference>
<gene>
    <name evidence="1" type="primary">rpmF</name>
    <name type="ordered locus">Swit_3554</name>
</gene>
<protein>
    <recommendedName>
        <fullName evidence="1">Large ribosomal subunit protein bL32</fullName>
    </recommendedName>
    <alternativeName>
        <fullName evidence="2">50S ribosomal protein L32</fullName>
    </alternativeName>
</protein>
<organism>
    <name type="scientific">Rhizorhabdus wittichii (strain DSM 6014 / CCUG 31198 / JCM 15750 / NBRC 105917 / EY 4224 / RW1)</name>
    <name type="common">Sphingomonas wittichii</name>
    <dbReference type="NCBI Taxonomy" id="392499"/>
    <lineage>
        <taxon>Bacteria</taxon>
        <taxon>Pseudomonadati</taxon>
        <taxon>Pseudomonadota</taxon>
        <taxon>Alphaproteobacteria</taxon>
        <taxon>Sphingomonadales</taxon>
        <taxon>Sphingomonadaceae</taxon>
        <taxon>Rhizorhabdus</taxon>
    </lineage>
</organism>
<name>RL32_RHIWR</name>
<evidence type="ECO:0000255" key="1">
    <source>
        <dbReference type="HAMAP-Rule" id="MF_00340"/>
    </source>
</evidence>
<evidence type="ECO:0000305" key="2"/>